<sequence>MPLPTSQLRLAMVAGEPSGDLLGASLLGGLRERLPESAQYYGIGGQRMIAQGFDSHWQMDKLTVRGYVEALGQIPEILRIRGELKRQLLAERPDAFIGVDAPDFNFNVEQAARDAGIPSIHFVCPSIWAWRGGRIKKIAKSVDHMLCLFPFEPAILDKAGVASTYVGHPLADEIPLEPDTHGARIALGLPADGPVIAVLPGSRRSEIALIGPTFFAAMALMQQREPGVRFVMPAATPALRALLQPLVDAHPKLALTITDGRSQVAMTAADAILVKSGTVTLEAALLKKPMVISYKVPWLTGQIMRRQGYLPYVGLPNILAGRFVVPELLQHFATPEALADATLTQLRDDANRRTLTEIFTEMHLSLRQNTAAKAAEAVVRVLEQRKGRA</sequence>
<dbReference type="EC" id="2.4.1.182" evidence="1"/>
<dbReference type="EMBL" id="CP000151">
    <property type="protein sequence ID" value="ABB08910.1"/>
    <property type="molecule type" value="Genomic_DNA"/>
</dbReference>
<dbReference type="RefSeq" id="WP_011352448.1">
    <property type="nucleotide sequence ID" value="NC_007510.1"/>
</dbReference>
<dbReference type="SMR" id="Q39F56"/>
<dbReference type="CAZy" id="GT19">
    <property type="family name" value="Glycosyltransferase Family 19"/>
</dbReference>
<dbReference type="GeneID" id="45095192"/>
<dbReference type="KEGG" id="bur:Bcep18194_A5316"/>
<dbReference type="PATRIC" id="fig|482957.22.peg.2265"/>
<dbReference type="HOGENOM" id="CLU_036577_3_0_4"/>
<dbReference type="UniPathway" id="UPA00973"/>
<dbReference type="Proteomes" id="UP000002705">
    <property type="component" value="Chromosome 1"/>
</dbReference>
<dbReference type="GO" id="GO:0016020">
    <property type="term" value="C:membrane"/>
    <property type="evidence" value="ECO:0007669"/>
    <property type="project" value="GOC"/>
</dbReference>
<dbReference type="GO" id="GO:0008915">
    <property type="term" value="F:lipid-A-disaccharide synthase activity"/>
    <property type="evidence" value="ECO:0007669"/>
    <property type="project" value="UniProtKB-UniRule"/>
</dbReference>
<dbReference type="GO" id="GO:0005543">
    <property type="term" value="F:phospholipid binding"/>
    <property type="evidence" value="ECO:0007669"/>
    <property type="project" value="TreeGrafter"/>
</dbReference>
<dbReference type="GO" id="GO:0009245">
    <property type="term" value="P:lipid A biosynthetic process"/>
    <property type="evidence" value="ECO:0007669"/>
    <property type="project" value="UniProtKB-UniRule"/>
</dbReference>
<dbReference type="HAMAP" id="MF_00392">
    <property type="entry name" value="LpxB"/>
    <property type="match status" value="1"/>
</dbReference>
<dbReference type="InterPro" id="IPR003835">
    <property type="entry name" value="Glyco_trans_19"/>
</dbReference>
<dbReference type="NCBIfam" id="TIGR00215">
    <property type="entry name" value="lpxB"/>
    <property type="match status" value="1"/>
</dbReference>
<dbReference type="PANTHER" id="PTHR30372">
    <property type="entry name" value="LIPID-A-DISACCHARIDE SYNTHASE"/>
    <property type="match status" value="1"/>
</dbReference>
<dbReference type="PANTHER" id="PTHR30372:SF4">
    <property type="entry name" value="LIPID-A-DISACCHARIDE SYNTHASE, MITOCHONDRIAL-RELATED"/>
    <property type="match status" value="1"/>
</dbReference>
<dbReference type="Pfam" id="PF02684">
    <property type="entry name" value="LpxB"/>
    <property type="match status" value="1"/>
</dbReference>
<dbReference type="SUPFAM" id="SSF53756">
    <property type="entry name" value="UDP-Glycosyltransferase/glycogen phosphorylase"/>
    <property type="match status" value="1"/>
</dbReference>
<comment type="function">
    <text evidence="1">Condensation of UDP-2,3-diacylglucosamine and 2,3-diacylglucosamine-1-phosphate to form lipid A disaccharide, a precursor of lipid A, a phosphorylated glycolipid that anchors the lipopolysaccharide to the outer membrane of the cell.</text>
</comment>
<comment type="catalytic activity">
    <reaction evidence="1">
        <text>a lipid X + a UDP-2-N,3-O-bis[(3R)-3-hydroxyacyl]-alpha-D-glucosamine = a lipid A disaccharide + UDP + H(+)</text>
        <dbReference type="Rhea" id="RHEA:67828"/>
        <dbReference type="ChEBI" id="CHEBI:15378"/>
        <dbReference type="ChEBI" id="CHEBI:58223"/>
        <dbReference type="ChEBI" id="CHEBI:137748"/>
        <dbReference type="ChEBI" id="CHEBI:176338"/>
        <dbReference type="ChEBI" id="CHEBI:176343"/>
        <dbReference type="EC" id="2.4.1.182"/>
    </reaction>
</comment>
<comment type="pathway">
    <text evidence="1">Bacterial outer membrane biogenesis; LPS lipid A biosynthesis.</text>
</comment>
<comment type="similarity">
    <text evidence="1">Belongs to the LpxB family.</text>
</comment>
<reference key="1">
    <citation type="submission" date="2005-10" db="EMBL/GenBank/DDBJ databases">
        <title>Complete sequence of chromosome 1 of Burkholderia sp. 383.</title>
        <authorList>
            <consortium name="US DOE Joint Genome Institute"/>
            <person name="Copeland A."/>
            <person name="Lucas S."/>
            <person name="Lapidus A."/>
            <person name="Barry K."/>
            <person name="Detter J.C."/>
            <person name="Glavina T."/>
            <person name="Hammon N."/>
            <person name="Israni S."/>
            <person name="Pitluck S."/>
            <person name="Chain P."/>
            <person name="Malfatti S."/>
            <person name="Shin M."/>
            <person name="Vergez L."/>
            <person name="Schmutz J."/>
            <person name="Larimer F."/>
            <person name="Land M."/>
            <person name="Kyrpides N."/>
            <person name="Lykidis A."/>
            <person name="Richardson P."/>
        </authorList>
    </citation>
    <scope>NUCLEOTIDE SEQUENCE [LARGE SCALE GENOMIC DNA]</scope>
    <source>
        <strain>ATCC 17760 / DSM 23089 / LMG 22485 / NCIMB 9086 / R18194 / 383</strain>
    </source>
</reference>
<gene>
    <name evidence="1" type="primary">lpxB</name>
    <name type="ordered locus">Bcep18194_A5316</name>
</gene>
<feature type="chain" id="PRO_0000255167" description="Lipid-A-disaccharide synthase">
    <location>
        <begin position="1"/>
        <end position="389"/>
    </location>
</feature>
<protein>
    <recommendedName>
        <fullName evidence="1">Lipid-A-disaccharide synthase</fullName>
        <ecNumber evidence="1">2.4.1.182</ecNumber>
    </recommendedName>
</protein>
<proteinExistence type="inferred from homology"/>
<name>LPXB_BURL3</name>
<accession>Q39F56</accession>
<organism>
    <name type="scientific">Burkholderia lata (strain ATCC 17760 / DSM 23089 / LMG 22485 / NCIMB 9086 / R18194 / 383)</name>
    <dbReference type="NCBI Taxonomy" id="482957"/>
    <lineage>
        <taxon>Bacteria</taxon>
        <taxon>Pseudomonadati</taxon>
        <taxon>Pseudomonadota</taxon>
        <taxon>Betaproteobacteria</taxon>
        <taxon>Burkholderiales</taxon>
        <taxon>Burkholderiaceae</taxon>
        <taxon>Burkholderia</taxon>
        <taxon>Burkholderia cepacia complex</taxon>
    </lineage>
</organism>
<evidence type="ECO:0000255" key="1">
    <source>
        <dbReference type="HAMAP-Rule" id="MF_00392"/>
    </source>
</evidence>
<keyword id="KW-0328">Glycosyltransferase</keyword>
<keyword id="KW-0441">Lipid A biosynthesis</keyword>
<keyword id="KW-0444">Lipid biosynthesis</keyword>
<keyword id="KW-0443">Lipid metabolism</keyword>
<keyword id="KW-0808">Transferase</keyword>